<proteinExistence type="inferred from homology"/>
<sequence length="157" mass="16984">MTKTVFVLNGPNLNLLGKREPGIYGVATLDDIEASCKREAGQLELQIDFRQSNHEGDLVSWIQEAGEKNAYVLINPAAYSHTSVAIHDAIRSARVTVVEVHLSNIHAREAFRHHSHVSAVTKGVICGFGAEGYLLGLRALAAIAKEEENNGQSIKGA</sequence>
<feature type="chain" id="PRO_0000159881" description="3-dehydroquinate dehydratase">
    <location>
        <begin position="1"/>
        <end position="157"/>
    </location>
</feature>
<feature type="active site" description="Proton acceptor" evidence="1">
    <location>
        <position position="24"/>
    </location>
</feature>
<feature type="active site" description="Proton donor" evidence="1">
    <location>
        <position position="101"/>
    </location>
</feature>
<feature type="binding site" evidence="1">
    <location>
        <position position="75"/>
    </location>
    <ligand>
        <name>substrate</name>
    </ligand>
</feature>
<feature type="binding site" evidence="1">
    <location>
        <position position="81"/>
    </location>
    <ligand>
        <name>substrate</name>
    </ligand>
</feature>
<feature type="binding site" evidence="1">
    <location>
        <position position="88"/>
    </location>
    <ligand>
        <name>substrate</name>
    </ligand>
</feature>
<feature type="binding site" evidence="1">
    <location>
        <begin position="102"/>
        <end position="103"/>
    </location>
    <ligand>
        <name>substrate</name>
    </ligand>
</feature>
<feature type="binding site" evidence="1">
    <location>
        <position position="112"/>
    </location>
    <ligand>
        <name>substrate</name>
    </ligand>
</feature>
<feature type="site" description="Transition state stabilizer" evidence="1">
    <location>
        <position position="19"/>
    </location>
</feature>
<evidence type="ECO:0000255" key="1">
    <source>
        <dbReference type="HAMAP-Rule" id="MF_00169"/>
    </source>
</evidence>
<evidence type="ECO:0000305" key="2"/>
<dbReference type="EC" id="4.2.1.10" evidence="1"/>
<dbReference type="EMBL" id="AE008917">
    <property type="protein sequence ID" value="AAL52242.1"/>
    <property type="status" value="ALT_INIT"/>
    <property type="molecule type" value="Genomic_DNA"/>
</dbReference>
<dbReference type="PIR" id="AG3384">
    <property type="entry name" value="AG3384"/>
</dbReference>
<dbReference type="RefSeq" id="WP_005969156.1">
    <property type="nucleotide sequence ID" value="NZ_GG703778.1"/>
</dbReference>
<dbReference type="SMR" id="Q8YGU6"/>
<dbReference type="GeneID" id="29593890"/>
<dbReference type="KEGG" id="bme:BMEI1061"/>
<dbReference type="KEGG" id="bmel:DK63_353"/>
<dbReference type="PATRIC" id="fig|224914.52.peg.366"/>
<dbReference type="eggNOG" id="COG0757">
    <property type="taxonomic scope" value="Bacteria"/>
</dbReference>
<dbReference type="PhylomeDB" id="Q8YGU6"/>
<dbReference type="UniPathway" id="UPA00053">
    <property type="reaction ID" value="UER00086"/>
</dbReference>
<dbReference type="Proteomes" id="UP000000419">
    <property type="component" value="Chromosome I"/>
</dbReference>
<dbReference type="GO" id="GO:0003855">
    <property type="term" value="F:3-dehydroquinate dehydratase activity"/>
    <property type="evidence" value="ECO:0007669"/>
    <property type="project" value="UniProtKB-UniRule"/>
</dbReference>
<dbReference type="GO" id="GO:0008652">
    <property type="term" value="P:amino acid biosynthetic process"/>
    <property type="evidence" value="ECO:0007669"/>
    <property type="project" value="UniProtKB-KW"/>
</dbReference>
<dbReference type="GO" id="GO:0009073">
    <property type="term" value="P:aromatic amino acid family biosynthetic process"/>
    <property type="evidence" value="ECO:0007669"/>
    <property type="project" value="UniProtKB-KW"/>
</dbReference>
<dbReference type="GO" id="GO:0009423">
    <property type="term" value="P:chorismate biosynthetic process"/>
    <property type="evidence" value="ECO:0007669"/>
    <property type="project" value="UniProtKB-UniRule"/>
</dbReference>
<dbReference type="GO" id="GO:0019631">
    <property type="term" value="P:quinate catabolic process"/>
    <property type="evidence" value="ECO:0007669"/>
    <property type="project" value="TreeGrafter"/>
</dbReference>
<dbReference type="CDD" id="cd00466">
    <property type="entry name" value="DHQase_II"/>
    <property type="match status" value="1"/>
</dbReference>
<dbReference type="Gene3D" id="3.40.50.9100">
    <property type="entry name" value="Dehydroquinase, class II"/>
    <property type="match status" value="1"/>
</dbReference>
<dbReference type="HAMAP" id="MF_00169">
    <property type="entry name" value="AroQ"/>
    <property type="match status" value="1"/>
</dbReference>
<dbReference type="InterPro" id="IPR001874">
    <property type="entry name" value="DHquinase_II"/>
</dbReference>
<dbReference type="InterPro" id="IPR018509">
    <property type="entry name" value="DHquinase_II_CS"/>
</dbReference>
<dbReference type="InterPro" id="IPR036441">
    <property type="entry name" value="DHquinase_II_sf"/>
</dbReference>
<dbReference type="NCBIfam" id="TIGR01088">
    <property type="entry name" value="aroQ"/>
    <property type="match status" value="1"/>
</dbReference>
<dbReference type="NCBIfam" id="NF003805">
    <property type="entry name" value="PRK05395.1-2"/>
    <property type="match status" value="1"/>
</dbReference>
<dbReference type="NCBIfam" id="NF003806">
    <property type="entry name" value="PRK05395.1-3"/>
    <property type="match status" value="1"/>
</dbReference>
<dbReference type="NCBIfam" id="NF003807">
    <property type="entry name" value="PRK05395.1-4"/>
    <property type="match status" value="1"/>
</dbReference>
<dbReference type="PANTHER" id="PTHR21272">
    <property type="entry name" value="CATABOLIC 3-DEHYDROQUINASE"/>
    <property type="match status" value="1"/>
</dbReference>
<dbReference type="PANTHER" id="PTHR21272:SF3">
    <property type="entry name" value="CATABOLIC 3-DEHYDROQUINASE"/>
    <property type="match status" value="1"/>
</dbReference>
<dbReference type="Pfam" id="PF01220">
    <property type="entry name" value="DHquinase_II"/>
    <property type="match status" value="1"/>
</dbReference>
<dbReference type="PIRSF" id="PIRSF001399">
    <property type="entry name" value="DHquinase_II"/>
    <property type="match status" value="1"/>
</dbReference>
<dbReference type="SUPFAM" id="SSF52304">
    <property type="entry name" value="Type II 3-dehydroquinate dehydratase"/>
    <property type="match status" value="1"/>
</dbReference>
<dbReference type="PROSITE" id="PS01029">
    <property type="entry name" value="DEHYDROQUINASE_II"/>
    <property type="match status" value="1"/>
</dbReference>
<comment type="function">
    <text evidence="1">Catalyzes a trans-dehydration via an enolate intermediate.</text>
</comment>
<comment type="catalytic activity">
    <reaction evidence="1">
        <text>3-dehydroquinate = 3-dehydroshikimate + H2O</text>
        <dbReference type="Rhea" id="RHEA:21096"/>
        <dbReference type="ChEBI" id="CHEBI:15377"/>
        <dbReference type="ChEBI" id="CHEBI:16630"/>
        <dbReference type="ChEBI" id="CHEBI:32364"/>
        <dbReference type="EC" id="4.2.1.10"/>
    </reaction>
</comment>
<comment type="pathway">
    <text evidence="1">Metabolic intermediate biosynthesis; chorismate biosynthesis; chorismate from D-erythrose 4-phosphate and phosphoenolpyruvate: step 3/7.</text>
</comment>
<comment type="subunit">
    <text evidence="1">Homododecamer.</text>
</comment>
<comment type="similarity">
    <text evidence="1">Belongs to the type-II 3-dehydroquinase family.</text>
</comment>
<comment type="sequence caution" evidence="2">
    <conflict type="erroneous initiation">
        <sequence resource="EMBL-CDS" id="AAL52242"/>
    </conflict>
</comment>
<organism>
    <name type="scientific">Brucella melitensis biotype 1 (strain ATCC 23456 / CCUG 17765 / NCTC 10094 / 16M)</name>
    <dbReference type="NCBI Taxonomy" id="224914"/>
    <lineage>
        <taxon>Bacteria</taxon>
        <taxon>Pseudomonadati</taxon>
        <taxon>Pseudomonadota</taxon>
        <taxon>Alphaproteobacteria</taxon>
        <taxon>Hyphomicrobiales</taxon>
        <taxon>Brucellaceae</taxon>
        <taxon>Brucella/Ochrobactrum group</taxon>
        <taxon>Brucella</taxon>
    </lineage>
</organism>
<name>AROQ_BRUME</name>
<keyword id="KW-0028">Amino-acid biosynthesis</keyword>
<keyword id="KW-0057">Aromatic amino acid biosynthesis</keyword>
<keyword id="KW-0456">Lyase</keyword>
<accession>Q8YGU6</accession>
<reference key="1">
    <citation type="journal article" date="2002" name="Proc. Natl. Acad. Sci. U.S.A.">
        <title>The genome sequence of the facultative intracellular pathogen Brucella melitensis.</title>
        <authorList>
            <person name="DelVecchio V.G."/>
            <person name="Kapatral V."/>
            <person name="Redkar R.J."/>
            <person name="Patra G."/>
            <person name="Mujer C."/>
            <person name="Los T."/>
            <person name="Ivanova N."/>
            <person name="Anderson I."/>
            <person name="Bhattacharyya A."/>
            <person name="Lykidis A."/>
            <person name="Reznik G."/>
            <person name="Jablonski L."/>
            <person name="Larsen N."/>
            <person name="D'Souza M."/>
            <person name="Bernal A."/>
            <person name="Mazur M."/>
            <person name="Goltsman E."/>
            <person name="Selkov E."/>
            <person name="Elzer P.H."/>
            <person name="Hagius S."/>
            <person name="O'Callaghan D."/>
            <person name="Letesson J.-J."/>
            <person name="Haselkorn R."/>
            <person name="Kyrpides N.C."/>
            <person name="Overbeek R."/>
        </authorList>
    </citation>
    <scope>NUCLEOTIDE SEQUENCE [LARGE SCALE GENOMIC DNA]</scope>
    <source>
        <strain>ATCC 23456 / CCUG 17765 / NCTC 10094 / 16M</strain>
    </source>
</reference>
<gene>
    <name evidence="1" type="primary">aroQ</name>
    <name type="ordered locus">BMEI1061</name>
</gene>
<protein>
    <recommendedName>
        <fullName evidence="1">3-dehydroquinate dehydratase</fullName>
        <shortName evidence="1">3-dehydroquinase</shortName>
        <ecNumber evidence="1">4.2.1.10</ecNumber>
    </recommendedName>
    <alternativeName>
        <fullName evidence="1">Type II DHQase</fullName>
    </alternativeName>
</protein>